<sequence length="129" mass="13793">MAKKTRRVVKRKKKIAVDHGVVHIKSSYNNTIITLTDPDGKVITWGSGGTAGFQGTRKGTPYAAQLAADQVAKEAVKLGIKKVDILVKGPGSGREAAIRTFQAAGLEIGTIKDVTPIPFNGCRPKKKRV</sequence>
<gene>
    <name evidence="1" type="primary">rpsK</name>
    <name type="ordered locus">Tmel_0979</name>
</gene>
<comment type="function">
    <text evidence="1">Located on the platform of the 30S subunit, it bridges several disparate RNA helices of the 16S rRNA. Forms part of the Shine-Dalgarno cleft in the 70S ribosome.</text>
</comment>
<comment type="subunit">
    <text evidence="1">Part of the 30S ribosomal subunit. Interacts with proteins S7 and S18. Binds to IF-3.</text>
</comment>
<comment type="similarity">
    <text evidence="1">Belongs to the universal ribosomal protein uS11 family.</text>
</comment>
<organism>
    <name type="scientific">Thermosipho melanesiensis (strain DSM 12029 / CIP 104789 / BI429)</name>
    <dbReference type="NCBI Taxonomy" id="391009"/>
    <lineage>
        <taxon>Bacteria</taxon>
        <taxon>Thermotogati</taxon>
        <taxon>Thermotogota</taxon>
        <taxon>Thermotogae</taxon>
        <taxon>Thermotogales</taxon>
        <taxon>Fervidobacteriaceae</taxon>
        <taxon>Thermosipho</taxon>
    </lineage>
</organism>
<keyword id="KW-0687">Ribonucleoprotein</keyword>
<keyword id="KW-0689">Ribosomal protein</keyword>
<keyword id="KW-0694">RNA-binding</keyword>
<keyword id="KW-0699">rRNA-binding</keyword>
<reference key="1">
    <citation type="submission" date="2007-05" db="EMBL/GenBank/DDBJ databases">
        <title>Complete sequence of Thermosipho melanesiensis BI429.</title>
        <authorList>
            <consortium name="US DOE Joint Genome Institute"/>
            <person name="Copeland A."/>
            <person name="Lucas S."/>
            <person name="Lapidus A."/>
            <person name="Barry K."/>
            <person name="Glavina del Rio T."/>
            <person name="Dalin E."/>
            <person name="Tice H."/>
            <person name="Pitluck S."/>
            <person name="Chertkov O."/>
            <person name="Brettin T."/>
            <person name="Bruce D."/>
            <person name="Detter J.C."/>
            <person name="Han C."/>
            <person name="Schmutz J."/>
            <person name="Larimer F."/>
            <person name="Land M."/>
            <person name="Hauser L."/>
            <person name="Kyrpides N."/>
            <person name="Mikhailova N."/>
            <person name="Nelson K."/>
            <person name="Gogarten J.P."/>
            <person name="Noll K."/>
            <person name="Richardson P."/>
        </authorList>
    </citation>
    <scope>NUCLEOTIDE SEQUENCE [LARGE SCALE GENOMIC DNA]</scope>
    <source>
        <strain>DSM 12029 / CIP 104789 / BI429</strain>
    </source>
</reference>
<name>RS11_THEM4</name>
<evidence type="ECO:0000255" key="1">
    <source>
        <dbReference type="HAMAP-Rule" id="MF_01310"/>
    </source>
</evidence>
<evidence type="ECO:0000305" key="2"/>
<protein>
    <recommendedName>
        <fullName evidence="1">Small ribosomal subunit protein uS11</fullName>
    </recommendedName>
    <alternativeName>
        <fullName evidence="2">30S ribosomal protein S11</fullName>
    </alternativeName>
</protein>
<dbReference type="EMBL" id="CP000716">
    <property type="protein sequence ID" value="ABR30840.1"/>
    <property type="molecule type" value="Genomic_DNA"/>
</dbReference>
<dbReference type="RefSeq" id="WP_012057200.1">
    <property type="nucleotide sequence ID" value="NC_009616.1"/>
</dbReference>
<dbReference type="SMR" id="A6LLN9"/>
<dbReference type="STRING" id="391009.Tmel_0979"/>
<dbReference type="KEGG" id="tme:Tmel_0979"/>
<dbReference type="eggNOG" id="COG0100">
    <property type="taxonomic scope" value="Bacteria"/>
</dbReference>
<dbReference type="HOGENOM" id="CLU_072439_5_0_0"/>
<dbReference type="OrthoDB" id="9806415at2"/>
<dbReference type="Proteomes" id="UP000001110">
    <property type="component" value="Chromosome"/>
</dbReference>
<dbReference type="GO" id="GO:1990904">
    <property type="term" value="C:ribonucleoprotein complex"/>
    <property type="evidence" value="ECO:0007669"/>
    <property type="project" value="UniProtKB-KW"/>
</dbReference>
<dbReference type="GO" id="GO:0005840">
    <property type="term" value="C:ribosome"/>
    <property type="evidence" value="ECO:0007669"/>
    <property type="project" value="UniProtKB-KW"/>
</dbReference>
<dbReference type="GO" id="GO:0019843">
    <property type="term" value="F:rRNA binding"/>
    <property type="evidence" value="ECO:0007669"/>
    <property type="project" value="UniProtKB-UniRule"/>
</dbReference>
<dbReference type="GO" id="GO:0003735">
    <property type="term" value="F:structural constituent of ribosome"/>
    <property type="evidence" value="ECO:0007669"/>
    <property type="project" value="InterPro"/>
</dbReference>
<dbReference type="GO" id="GO:0006412">
    <property type="term" value="P:translation"/>
    <property type="evidence" value="ECO:0007669"/>
    <property type="project" value="UniProtKB-UniRule"/>
</dbReference>
<dbReference type="FunFam" id="3.30.420.80:FF:000010">
    <property type="entry name" value="30S ribosomal protein S11"/>
    <property type="match status" value="1"/>
</dbReference>
<dbReference type="Gene3D" id="3.30.420.80">
    <property type="entry name" value="Ribosomal protein S11"/>
    <property type="match status" value="1"/>
</dbReference>
<dbReference type="HAMAP" id="MF_01310">
    <property type="entry name" value="Ribosomal_uS11"/>
    <property type="match status" value="1"/>
</dbReference>
<dbReference type="InterPro" id="IPR001971">
    <property type="entry name" value="Ribosomal_uS11"/>
</dbReference>
<dbReference type="InterPro" id="IPR019981">
    <property type="entry name" value="Ribosomal_uS11_bac-type"/>
</dbReference>
<dbReference type="InterPro" id="IPR018102">
    <property type="entry name" value="Ribosomal_uS11_CS"/>
</dbReference>
<dbReference type="InterPro" id="IPR036967">
    <property type="entry name" value="Ribosomal_uS11_sf"/>
</dbReference>
<dbReference type="NCBIfam" id="NF003698">
    <property type="entry name" value="PRK05309.1"/>
    <property type="match status" value="1"/>
</dbReference>
<dbReference type="NCBIfam" id="TIGR03632">
    <property type="entry name" value="uS11_bact"/>
    <property type="match status" value="1"/>
</dbReference>
<dbReference type="PANTHER" id="PTHR11759">
    <property type="entry name" value="40S RIBOSOMAL PROTEIN S14/30S RIBOSOMAL PROTEIN S11"/>
    <property type="match status" value="1"/>
</dbReference>
<dbReference type="Pfam" id="PF00411">
    <property type="entry name" value="Ribosomal_S11"/>
    <property type="match status" value="1"/>
</dbReference>
<dbReference type="PIRSF" id="PIRSF002131">
    <property type="entry name" value="Ribosomal_S11"/>
    <property type="match status" value="1"/>
</dbReference>
<dbReference type="SUPFAM" id="SSF53137">
    <property type="entry name" value="Translational machinery components"/>
    <property type="match status" value="1"/>
</dbReference>
<dbReference type="PROSITE" id="PS00054">
    <property type="entry name" value="RIBOSOMAL_S11"/>
    <property type="match status" value="1"/>
</dbReference>
<proteinExistence type="inferred from homology"/>
<accession>A6LLN9</accession>
<feature type="chain" id="PRO_1000051861" description="Small ribosomal subunit protein uS11">
    <location>
        <begin position="1"/>
        <end position="129"/>
    </location>
</feature>